<feature type="chain" id="PRO_0000195344" description="Glucose-1-phosphate adenylyltransferase 2">
    <location>
        <begin position="1"/>
        <end position="407"/>
    </location>
</feature>
<feature type="binding site" evidence="1">
    <location>
        <position position="97"/>
    </location>
    <ligand>
        <name>alpha-D-glucose 1-phosphate</name>
        <dbReference type="ChEBI" id="CHEBI:58601"/>
    </ligand>
</feature>
<feature type="binding site" evidence="1">
    <location>
        <position position="162"/>
    </location>
    <ligand>
        <name>alpha-D-glucose 1-phosphate</name>
        <dbReference type="ChEBI" id="CHEBI:58601"/>
    </ligand>
</feature>
<feature type="binding site" evidence="1">
    <location>
        <begin position="177"/>
        <end position="178"/>
    </location>
    <ligand>
        <name>alpha-D-glucose 1-phosphate</name>
        <dbReference type="ChEBI" id="CHEBI:58601"/>
    </ligand>
</feature>
<feature type="binding site" evidence="1">
    <location>
        <position position="195"/>
    </location>
    <ligand>
        <name>alpha-D-glucose 1-phosphate</name>
        <dbReference type="ChEBI" id="CHEBI:58601"/>
    </ligand>
</feature>
<sequence length="407" mass="45372">MQDTLAVILAGGMGSRLSPLTDDRAKPAVPFGGKYRIIDFTLTNCLHSGLRRILVLTQYKSHSLHKHLRNGWSIFNPELGEFITVVPPQMRKGGKWYEGTADALFHNMWLLARSDAKYVVVLSGDHIYRMDYAAMLEEHISKNATLTIACMQVPRHEASAFGVMAIDDDSRITCFVEKPADPPCIPNRPDHSLASMGIYIFNMDVLKKALTEDAEIEQSSHDFGKDVIPKLIATGSVFAYSFCSGKGRVARDCYWRDVGTIDSFYDANMDLLQPVPPMNLYQKNWAIRTYEQQYPPARTVSSATGNEGIFINSIIANGVINSGGSVQHSIISSNVRINDSALIVDSILFDDVEVGEGCKLIHCIIDKHVKIPPYTEIGLNPIEDRKRFHISERGVVVVPESYQFSTE</sequence>
<gene>
    <name evidence="1" type="primary">glgC2</name>
    <name type="ordered locus">VC_A0699</name>
</gene>
<reference key="1">
    <citation type="journal article" date="2000" name="Nature">
        <title>DNA sequence of both chromosomes of the cholera pathogen Vibrio cholerae.</title>
        <authorList>
            <person name="Heidelberg J.F."/>
            <person name="Eisen J.A."/>
            <person name="Nelson W.C."/>
            <person name="Clayton R.A."/>
            <person name="Gwinn M.L."/>
            <person name="Dodson R.J."/>
            <person name="Haft D.H."/>
            <person name="Hickey E.K."/>
            <person name="Peterson J.D."/>
            <person name="Umayam L.A."/>
            <person name="Gill S.R."/>
            <person name="Nelson K.E."/>
            <person name="Read T.D."/>
            <person name="Tettelin H."/>
            <person name="Richardson D.L."/>
            <person name="Ermolaeva M.D."/>
            <person name="Vamathevan J.J."/>
            <person name="Bass S."/>
            <person name="Qin H."/>
            <person name="Dragoi I."/>
            <person name="Sellers P."/>
            <person name="McDonald L.A."/>
            <person name="Utterback T.R."/>
            <person name="Fleischmann R.D."/>
            <person name="Nierman W.C."/>
            <person name="White O."/>
            <person name="Salzberg S.L."/>
            <person name="Smith H.O."/>
            <person name="Colwell R.R."/>
            <person name="Mekalanos J.J."/>
            <person name="Venter J.C."/>
            <person name="Fraser C.M."/>
        </authorList>
    </citation>
    <scope>NUCLEOTIDE SEQUENCE [LARGE SCALE GENOMIC DNA]</scope>
    <source>
        <strain>ATCC 39315 / El Tor Inaba N16961</strain>
    </source>
</reference>
<comment type="function">
    <text evidence="1">Involved in the biosynthesis of ADP-glucose, a building block required for the elongation reactions to produce glycogen. Catalyzes the reaction between ATP and alpha-D-glucose 1-phosphate (G1P) to produce pyrophosphate and ADP-Glc.</text>
</comment>
<comment type="catalytic activity">
    <reaction evidence="1">
        <text>alpha-D-glucose 1-phosphate + ATP + H(+) = ADP-alpha-D-glucose + diphosphate</text>
        <dbReference type="Rhea" id="RHEA:12120"/>
        <dbReference type="ChEBI" id="CHEBI:15378"/>
        <dbReference type="ChEBI" id="CHEBI:30616"/>
        <dbReference type="ChEBI" id="CHEBI:33019"/>
        <dbReference type="ChEBI" id="CHEBI:57498"/>
        <dbReference type="ChEBI" id="CHEBI:58601"/>
        <dbReference type="EC" id="2.7.7.27"/>
    </reaction>
</comment>
<comment type="pathway">
    <text evidence="1">Glycan biosynthesis; glycogen biosynthesis.</text>
</comment>
<comment type="subunit">
    <text evidence="1">Homotetramer.</text>
</comment>
<comment type="similarity">
    <text evidence="1">Belongs to the bacterial/plant glucose-1-phosphate adenylyltransferase family.</text>
</comment>
<protein>
    <recommendedName>
        <fullName evidence="1">Glucose-1-phosphate adenylyltransferase 2</fullName>
        <ecNumber evidence="1">2.7.7.27</ecNumber>
    </recommendedName>
    <alternativeName>
        <fullName evidence="1">ADP-glucose pyrophosphorylase 2</fullName>
        <shortName evidence="1">ADPGlc PPase 2</shortName>
    </alternativeName>
    <alternativeName>
        <fullName evidence="1">ADP-glucose synthase 2</fullName>
    </alternativeName>
</protein>
<accession>Q9KLP4</accession>
<dbReference type="EC" id="2.7.7.27" evidence="1"/>
<dbReference type="EMBL" id="AE003853">
    <property type="protein sequence ID" value="AAF96598.1"/>
    <property type="molecule type" value="Genomic_DNA"/>
</dbReference>
<dbReference type="PIR" id="C82428">
    <property type="entry name" value="C82428"/>
</dbReference>
<dbReference type="RefSeq" id="NP_233086.1">
    <property type="nucleotide sequence ID" value="NC_002506.1"/>
</dbReference>
<dbReference type="SMR" id="Q9KLP4"/>
<dbReference type="STRING" id="243277.VC_A0699"/>
<dbReference type="DNASU" id="2612101"/>
<dbReference type="EnsemblBacteria" id="AAF96598">
    <property type="protein sequence ID" value="AAF96598"/>
    <property type="gene ID" value="VC_A0699"/>
</dbReference>
<dbReference type="KEGG" id="vch:VC_A0699"/>
<dbReference type="PATRIC" id="fig|243277.26.peg.3323"/>
<dbReference type="eggNOG" id="COG0448">
    <property type="taxonomic scope" value="Bacteria"/>
</dbReference>
<dbReference type="HOGENOM" id="CLU_029499_14_1_6"/>
<dbReference type="UniPathway" id="UPA00164"/>
<dbReference type="Proteomes" id="UP000000584">
    <property type="component" value="Chromosome 2"/>
</dbReference>
<dbReference type="GO" id="GO:0005524">
    <property type="term" value="F:ATP binding"/>
    <property type="evidence" value="ECO:0007669"/>
    <property type="project" value="UniProtKB-KW"/>
</dbReference>
<dbReference type="GO" id="GO:0008878">
    <property type="term" value="F:glucose-1-phosphate adenylyltransferase activity"/>
    <property type="evidence" value="ECO:0007669"/>
    <property type="project" value="UniProtKB-UniRule"/>
</dbReference>
<dbReference type="GO" id="GO:0005978">
    <property type="term" value="P:glycogen biosynthetic process"/>
    <property type="evidence" value="ECO:0007669"/>
    <property type="project" value="UniProtKB-UniRule"/>
</dbReference>
<dbReference type="CDD" id="cd02508">
    <property type="entry name" value="ADP_Glucose_PP"/>
    <property type="match status" value="1"/>
</dbReference>
<dbReference type="CDD" id="cd04651">
    <property type="entry name" value="LbH_G1P_AT_C"/>
    <property type="match status" value="1"/>
</dbReference>
<dbReference type="FunFam" id="3.90.550.10:FF:000014">
    <property type="entry name" value="Glucose-1-phosphate adenylyltransferase"/>
    <property type="match status" value="1"/>
</dbReference>
<dbReference type="Gene3D" id="2.160.10.10">
    <property type="entry name" value="Hexapeptide repeat proteins"/>
    <property type="match status" value="1"/>
</dbReference>
<dbReference type="Gene3D" id="3.90.550.10">
    <property type="entry name" value="Spore Coat Polysaccharide Biosynthesis Protein SpsA, Chain A"/>
    <property type="match status" value="1"/>
</dbReference>
<dbReference type="HAMAP" id="MF_00624">
    <property type="entry name" value="GlgC"/>
    <property type="match status" value="1"/>
</dbReference>
<dbReference type="InterPro" id="IPR011831">
    <property type="entry name" value="ADP-Glc_PPase"/>
</dbReference>
<dbReference type="InterPro" id="IPR005836">
    <property type="entry name" value="ADP_Glu_pyroP_CS"/>
</dbReference>
<dbReference type="InterPro" id="IPR023049">
    <property type="entry name" value="GlgC_bac"/>
</dbReference>
<dbReference type="InterPro" id="IPR056818">
    <property type="entry name" value="GlmU/GlgC-like_hexapep"/>
</dbReference>
<dbReference type="InterPro" id="IPR005835">
    <property type="entry name" value="NTP_transferase_dom"/>
</dbReference>
<dbReference type="InterPro" id="IPR029044">
    <property type="entry name" value="Nucleotide-diphossugar_trans"/>
</dbReference>
<dbReference type="InterPro" id="IPR011004">
    <property type="entry name" value="Trimer_LpxA-like_sf"/>
</dbReference>
<dbReference type="NCBIfam" id="TIGR02091">
    <property type="entry name" value="glgC"/>
    <property type="match status" value="1"/>
</dbReference>
<dbReference type="NCBIfam" id="NF001947">
    <property type="entry name" value="PRK00725.1"/>
    <property type="match status" value="1"/>
</dbReference>
<dbReference type="NCBIfam" id="NF002023">
    <property type="entry name" value="PRK00844.1"/>
    <property type="match status" value="1"/>
</dbReference>
<dbReference type="PANTHER" id="PTHR43523:SF2">
    <property type="entry name" value="GLUCOSE-1-PHOSPHATE ADENYLYLTRANSFERASE"/>
    <property type="match status" value="1"/>
</dbReference>
<dbReference type="PANTHER" id="PTHR43523">
    <property type="entry name" value="GLUCOSE-1-PHOSPHATE ADENYLYLTRANSFERASE-RELATED"/>
    <property type="match status" value="1"/>
</dbReference>
<dbReference type="Pfam" id="PF24894">
    <property type="entry name" value="Hexapep_GlmU"/>
    <property type="match status" value="1"/>
</dbReference>
<dbReference type="Pfam" id="PF00483">
    <property type="entry name" value="NTP_transferase"/>
    <property type="match status" value="1"/>
</dbReference>
<dbReference type="SUPFAM" id="SSF53448">
    <property type="entry name" value="Nucleotide-diphospho-sugar transferases"/>
    <property type="match status" value="1"/>
</dbReference>
<dbReference type="SUPFAM" id="SSF51161">
    <property type="entry name" value="Trimeric LpxA-like enzymes"/>
    <property type="match status" value="1"/>
</dbReference>
<dbReference type="PROSITE" id="PS00808">
    <property type="entry name" value="ADP_GLC_PYROPHOSPH_1"/>
    <property type="match status" value="1"/>
</dbReference>
<dbReference type="PROSITE" id="PS00809">
    <property type="entry name" value="ADP_GLC_PYROPHOSPH_2"/>
    <property type="match status" value="1"/>
</dbReference>
<dbReference type="PROSITE" id="PS00810">
    <property type="entry name" value="ADP_GLC_PYROPHOSPH_3"/>
    <property type="match status" value="1"/>
</dbReference>
<name>GLGC2_VIBCH</name>
<proteinExistence type="inferred from homology"/>
<keyword id="KW-0067">ATP-binding</keyword>
<keyword id="KW-0119">Carbohydrate metabolism</keyword>
<keyword id="KW-0320">Glycogen biosynthesis</keyword>
<keyword id="KW-0321">Glycogen metabolism</keyword>
<keyword id="KW-0547">Nucleotide-binding</keyword>
<keyword id="KW-0548">Nucleotidyltransferase</keyword>
<keyword id="KW-1185">Reference proteome</keyword>
<keyword id="KW-0808">Transferase</keyword>
<organism>
    <name type="scientific">Vibrio cholerae serotype O1 (strain ATCC 39315 / El Tor Inaba N16961)</name>
    <dbReference type="NCBI Taxonomy" id="243277"/>
    <lineage>
        <taxon>Bacteria</taxon>
        <taxon>Pseudomonadati</taxon>
        <taxon>Pseudomonadota</taxon>
        <taxon>Gammaproteobacteria</taxon>
        <taxon>Vibrionales</taxon>
        <taxon>Vibrionaceae</taxon>
        <taxon>Vibrio</taxon>
    </lineage>
</organism>
<evidence type="ECO:0000255" key="1">
    <source>
        <dbReference type="HAMAP-Rule" id="MF_00624"/>
    </source>
</evidence>